<gene>
    <name type="primary">Apex1</name>
    <name type="synonym">Ape</name>
    <name type="synonym">Apex</name>
    <name type="synonym">Ref1</name>
</gene>
<feature type="chain" id="PRO_0000200012" description="DNA repair nuclease/redox regulator APEX1">
    <location>
        <begin position="1"/>
        <end position="317"/>
    </location>
</feature>
<feature type="chain" id="PRO_0000402574" description="DNA repair nuclease/redox regulator APEX1, mitochondrial" evidence="1">
    <location>
        <begin position="31"/>
        <end position="317"/>
    </location>
</feature>
<feature type="region of interest" description="Disordered" evidence="6">
    <location>
        <begin position="1"/>
        <end position="57"/>
    </location>
</feature>
<feature type="region of interest" description="Necessary for interaction with YBX1, binding to RNA, association together with NPM1 to rRNA, endoribonuclease activity on abasic RNA and localization in the nucleoli" evidence="1">
    <location>
        <begin position="1"/>
        <end position="32"/>
    </location>
</feature>
<feature type="region of interest" description="Necessary for interaction with NPM1 and for efficient rRNA binding" evidence="1">
    <location>
        <begin position="22"/>
        <end position="32"/>
    </location>
</feature>
<feature type="region of interest" description="Mitochondrial targeting sequence (MTS)" evidence="1">
    <location>
        <begin position="288"/>
        <end position="317"/>
    </location>
</feature>
<feature type="short sequence motif" description="Nuclear localization signal (NLS)" evidence="1">
    <location>
        <begin position="8"/>
        <end position="12"/>
    </location>
</feature>
<feature type="short sequence motif" description="Nuclear export signal (NES)" evidence="1">
    <location>
        <begin position="63"/>
        <end position="79"/>
    </location>
</feature>
<feature type="compositionally biased region" description="Basic and acidic residues" evidence="6">
    <location>
        <begin position="15"/>
        <end position="37"/>
    </location>
</feature>
<feature type="active site" evidence="1">
    <location>
        <position position="170"/>
    </location>
</feature>
<feature type="active site" description="Proton donor/acceptor" evidence="1">
    <location>
        <position position="209"/>
    </location>
</feature>
<feature type="binding site" evidence="1">
    <location>
        <position position="69"/>
    </location>
    <ligand>
        <name>Mg(2+)</name>
        <dbReference type="ChEBI" id="CHEBI:18420"/>
        <label>1</label>
    </ligand>
</feature>
<feature type="binding site" evidence="1">
    <location>
        <position position="95"/>
    </location>
    <ligand>
        <name>Mg(2+)</name>
        <dbReference type="ChEBI" id="CHEBI:18420"/>
        <label>1</label>
    </ligand>
</feature>
<feature type="binding site" evidence="1">
    <location>
        <position position="209"/>
    </location>
    <ligand>
        <name>Mg(2+)</name>
        <dbReference type="ChEBI" id="CHEBI:18420"/>
        <label>2</label>
    </ligand>
</feature>
<feature type="binding site" evidence="1">
    <location>
        <position position="211"/>
    </location>
    <ligand>
        <name>Mg(2+)</name>
        <dbReference type="ChEBI" id="CHEBI:18420"/>
        <label>2</label>
    </ligand>
</feature>
<feature type="binding site" evidence="1">
    <location>
        <position position="307"/>
    </location>
    <ligand>
        <name>Mg(2+)</name>
        <dbReference type="ChEBI" id="CHEBI:18420"/>
        <label>1</label>
    </ligand>
</feature>
<feature type="site" description="Cleavage; by granzyme A" evidence="1">
    <location>
        <begin position="30"/>
        <end position="31"/>
    </location>
</feature>
<feature type="site" description="Transition state stabilizer" evidence="1">
    <location>
        <position position="211"/>
    </location>
</feature>
<feature type="site" description="Important for catalytic activity" evidence="1">
    <location>
        <position position="282"/>
    </location>
</feature>
<feature type="site" description="Interaction with DNA substrate" evidence="1">
    <location>
        <position position="308"/>
    </location>
</feature>
<feature type="modified residue" description="N6-acetyllysine; by EP300" evidence="3">
    <location>
        <position position="6"/>
    </location>
</feature>
<feature type="modified residue" description="Phosphoserine" evidence="10">
    <location>
        <position position="18"/>
    </location>
</feature>
<feature type="modified residue" description="N6-acetyllysine" evidence="3">
    <location>
        <position position="26"/>
    </location>
</feature>
<feature type="modified residue" description="N6-acetyllysine" evidence="3">
    <location>
        <position position="30"/>
    </location>
</feature>
<feature type="modified residue" description="N6-acetyllysine" evidence="3">
    <location>
        <position position="31"/>
    </location>
</feature>
<feature type="modified residue" description="N6-acetyllysine" evidence="3">
    <location>
        <position position="34"/>
    </location>
</feature>
<feature type="modified residue" description="Phosphoserine" evidence="3">
    <location>
        <position position="53"/>
    </location>
</feature>
<feature type="modified residue" description="S-nitrosocysteine; alternate" evidence="3">
    <location>
        <position position="64"/>
    </location>
</feature>
<feature type="modified residue" description="S-nitrosocysteine; alternate" evidence="3">
    <location>
        <position position="92"/>
    </location>
</feature>
<feature type="modified residue" description="N6-acetyllysine" evidence="3">
    <location>
        <position position="196"/>
    </location>
</feature>
<feature type="modified residue" description="Phosphothreonine; by CDK5" evidence="4">
    <location>
        <position position="232"/>
    </location>
</feature>
<feature type="modified residue" description="S-nitrosocysteine" evidence="3">
    <location>
        <position position="309"/>
    </location>
</feature>
<feature type="disulfide bond" description="Alternate" evidence="1">
    <location>
        <begin position="64"/>
        <end position="92"/>
    </location>
</feature>
<feature type="sequence conflict" description="In Ref. 1; AAA21019." evidence="9" ref="1">
    <location>
        <position position="10"/>
    </location>
</feature>
<feature type="sequence conflict" description="In Ref. 1; AAA21019." evidence="9" ref="1">
    <original>R</original>
    <variation>A</variation>
    <location>
        <position position="236"/>
    </location>
</feature>
<feature type="sequence conflict" description="In Ref. 1; AAA21019." evidence="9" ref="1">
    <original>H</original>
    <variation>Q</variation>
    <location>
        <position position="288"/>
    </location>
</feature>
<comment type="function">
    <text evidence="3 4 8">Multifunctional protein that plays a central role in the cellular response to oxidative stress. The two major activities of APEX1 are DNA repair and redox regulation of transcriptional factors (By similarity). Functions as an apurinic/apyrimidinic (AP) endodeoxyribonuclease in the base excision repair (BER) pathway of DNA lesions induced by oxidative and alkylating agents. Initiates repair of AP sites in DNA by catalyzing hydrolytic incision of the phosphodiester backbone immediately adjacent to the damage, generating a single-strand break with 5'-deoxyribose phosphate and 3'-hydroxyl ends. Also incises at AP sites in the DNA strand of DNA/RNA hybrids, single-stranded DNA regions of R-loop structures, and single-stranded RNA molecules (By similarity). Operates at switch sites of immunoglobulin (Ig) constant regions where it mediates Ig isotype class switch recombination. Processes AP sites induced by successive action of AICDA and UNG. Generates staggered nicks in opposite DNA strands resulting in the formation of double-strand DNA breaks that are finally resolved via non-homologous end joining repair pathway (By similarity). Has 3'-5' exodeoxyribonuclease activity on mismatched deoxyribonucleotides at the 3' termini of nicked or gapped DNA molecules during short-patch BER (By similarity). Possesses DNA 3' phosphodiesterase activity capable of removing lesions (such as phosphoglycolate and 8-oxoguanine) blocking the 3' side of DNA strand breaks (By similarity). Also acts as an endoribonuclease involved in the control of single-stranded RNA metabolism. Plays a role in regulating MYC mRNA turnover by preferentially cleaving in between UA and CA dinucleotides of the MYC coding region determinant (CRD). In association with NMD1, plays a role in the rRNA quality control process during cell cycle progression (By similarity) (PubMed:19401441). Acts as a loading factor for POLB onto non-incised AP sites in DNA and stimulates the 5'-terminal deoxyribose 5'-phosphate (dRp) excision activity of POLB (By similarity). Exerts reversible nuclear redox activity to regulate DNA binding affinity and transcriptional activity of transcriptional factors by controlling the redox status of their DNA-binding domain, such as the FOS/JUN AP-1 complex after exposure to IR (By similarity). Involved in calcium-dependent down-regulation of parathyroid hormone (PTH) expression by binding to negative calcium response elements (nCaREs). Together with HNRNPL or the dimer XRCC5/XRCC6, associates with nCaRE, acting as an activator of transcriptional repression (By similarity). May also play a role in the epigenetic regulation of gene expression by participating in DNA demethylation. Stimulates the YBX1-mediated MDR1 promoter activity, when acetylated at Lys-6 and Lys-7, leading to drug resistance (By similarity). Plays a role in protection from granzyme-mediated cellular repair leading to cell death (By similarity). Binds DNA and RNA. Associates, together with YBX1, on the MDR1 promoter. Together with NPM1, associates with rRNA (By similarity).</text>
</comment>
<comment type="catalytic activity">
    <reaction evidence="3">
        <text>a deoxyribonucleotide-2'-deoxyribose-5'-monophosphate-DNA + H2O = a 5'-end 2'-deoxyribose-5'-monophosphate-DNA + a 3'-end 2'-deoxyribonucleotide-DNA + H(+)</text>
        <dbReference type="Rhea" id="RHEA:81527"/>
        <dbReference type="Rhea" id="RHEA-COMP:13863"/>
        <dbReference type="Rhea" id="RHEA-COMP:19699"/>
        <dbReference type="Rhea" id="RHEA-COMP:19703"/>
        <dbReference type="ChEBI" id="CHEBI:15377"/>
        <dbReference type="ChEBI" id="CHEBI:15378"/>
        <dbReference type="ChEBI" id="CHEBI:138148"/>
        <dbReference type="ChEBI" id="CHEBI:231912"/>
        <dbReference type="ChEBI" id="CHEBI:231913"/>
    </reaction>
    <physiologicalReaction direction="left-to-right" evidence="3">
        <dbReference type="Rhea" id="RHEA:81528"/>
    </physiologicalReaction>
</comment>
<comment type="catalytic activity">
    <reaction evidence="3">
        <text>Exonucleolytic cleavage in the 3'- to 5'-direction to yield nucleoside 5'-phosphates.</text>
        <dbReference type="EC" id="3.1.11.2"/>
    </reaction>
</comment>
<comment type="catalytic activity">
    <reaction evidence="3">
        <text>a 3'-end 2'-deoxyribonucleotide-3'-phosphoglycolate-DNA + H2O = 2-phosphoglycolate + a 3'-end 2'-deoxyribonucleotide-DNA + H(+)</text>
        <dbReference type="Rhea" id="RHEA:81467"/>
        <dbReference type="Rhea" id="RHEA-COMP:13863"/>
        <dbReference type="Rhea" id="RHEA-COMP:19686"/>
        <dbReference type="ChEBI" id="CHEBI:15377"/>
        <dbReference type="ChEBI" id="CHEBI:15378"/>
        <dbReference type="ChEBI" id="CHEBI:58033"/>
        <dbReference type="ChEBI" id="CHEBI:138148"/>
        <dbReference type="ChEBI" id="CHEBI:231894"/>
    </reaction>
    <physiologicalReaction direction="left-to-right" evidence="3">
        <dbReference type="Rhea" id="RHEA:81468"/>
    </physiologicalReaction>
</comment>
<comment type="catalytic activity">
    <reaction evidence="3">
        <text>a 3'-end 2'-deoxyribonucleotide-8-oxoguanine-DNA + H2O = 8-oxo-dGMP + a 3'-end 2'-deoxyribonucleotide-DNA + H(+)</text>
        <dbReference type="Rhea" id="RHEA:81471"/>
        <dbReference type="Rhea" id="RHEA-COMP:13863"/>
        <dbReference type="Rhea" id="RHEA-COMP:19687"/>
        <dbReference type="ChEBI" id="CHEBI:15377"/>
        <dbReference type="ChEBI" id="CHEBI:15378"/>
        <dbReference type="ChEBI" id="CHEBI:63224"/>
        <dbReference type="ChEBI" id="CHEBI:138148"/>
        <dbReference type="ChEBI" id="CHEBI:231896"/>
    </reaction>
    <physiologicalReaction direction="left-to-right" evidence="3">
        <dbReference type="Rhea" id="RHEA:81472"/>
    </physiologicalReaction>
</comment>
<comment type="cofactor">
    <cofactor evidence="3">
        <name>Mg(2+)</name>
        <dbReference type="ChEBI" id="CHEBI:18420"/>
    </cofactor>
    <cofactor evidence="3">
        <name>Mn(2+)</name>
        <dbReference type="ChEBI" id="CHEBI:29035"/>
    </cofactor>
    <text evidence="3">Probably binds two magnesium or manganese ions per subunit.</text>
</comment>
<comment type="activity regulation">
    <text evidence="3">NPM1 stimulates endodeoxyribonuclease activity on double-stranded DNA with AP sites, but inhibits endoribonuclease activity on single-stranded RNA containing AP sites.</text>
</comment>
<comment type="subunit">
    <text evidence="3">Monomer. Homodimer; disulfide-linked. Component of the SET complex, composed of at least APEX1, SET, ANP32A, HMGB2, NME1 and TREX1. Associates with the dimer XRCC5/XRCC6 in a DNA-dependent manner. Interacts with SIRT1; the interaction is increased in the context of genotoxic stress. Interacts with HDAC1, HDAC2 and HDAC3; the interactions are not dependent on the APEX1 acetylation status. Interacts with XRCC1; the interaction is induced by SIRT1 and increased with the APEX1 acetylated form. Interacts with NPM1 (via N-terminal domain); the interaction is RNA-dependent and decreases in hydrogen peroxide-damaged cells. Interacts (via N-terminus) with YBX1 (via C-terminus); the interaction is increased in presence of APEX1 acetylated. Interacts with HNRNPL; the interaction is DNA-dependent. Interacts (via N-terminus) with KPNA1 and KPNA2. Interacts with TXN; the interaction stimulates the FOS/JUN AP-1 complex DNA-binding activity in a redox-dependent manner. Interacts with GZMA, KRT8, MDM2, POLB, PRDX6, PRPF19, RPLP0, TOMM20 and WDR77. Binds to CDK5 (By similarity).</text>
</comment>
<comment type="subcellular location">
    <subcellularLocation>
        <location evidence="5 7">Nucleus</location>
    </subcellularLocation>
    <subcellularLocation>
        <location evidence="1">Nucleus</location>
        <location evidence="1">Nucleolus</location>
    </subcellularLocation>
    <subcellularLocation>
        <location evidence="5">Nucleus speckle</location>
    </subcellularLocation>
    <subcellularLocation>
        <location evidence="1">Endoplasmic reticulum</location>
    </subcellularLocation>
    <subcellularLocation>
        <location evidence="5">Cytoplasm</location>
    </subcellularLocation>
    <text evidence="1">Colocalized with SIRT1 in the nucleus. Colocalized with YBX1 in nuclear speckles after genotoxic stress. Together with OGG1 is recruited to nuclear speckles in UVA-irradiated cells. Colocalized with nucleolin and NPM1 in the nucleolus. Its nucleolar localization is cell cycle dependent and requires active rRNA transcription. Colocalized with calreticulin in the endoplasmic reticulum. Translocation from the nucleus to the cytoplasm is stimulated in presence of nitric oxide (NO) and function in a CRM1-dependent manner, possibly as a consequence of demasking a nuclear export signal (amino acid position 63-79). S-nitrosylation at Cys-92 and Cys-309 regulates its nuclear-cytosolic shuttling. Detected in the cytoplasm of B cells stimulated to switch. Ubiquitinated form is localized predominantly in the cytoplasm (By similarity).</text>
</comment>
<comment type="subcellular location">
    <molecule>DNA repair nuclease/redox regulator APEX1, mitochondrial</molecule>
    <subcellularLocation>
        <location>Mitochondrion</location>
    </subcellularLocation>
    <text evidence="1">The cleaved APEX2 is only detected in mitochondria. Translocation from the cytoplasm to the mitochondria is mediated by ROS signaling and cleavage mediated by granzyme A. Tom20-dependent translocated mitochondrial APEX1 level is significantly increased after genotoxic stress (By similarity).</text>
</comment>
<comment type="domain">
    <text evidence="1">The N-terminus contains the redox activity while the C-terminus exerts the DNA AP-endodeoxyribonuclease activity; both function are independent in their actions. An unconventional mitochondrial targeting sequence (MTS) is harbored within the C-terminus, that appears to be masked by the N-terminal sequence containing the nuclear localization signal (NLS), that probably blocks the interaction between the MTS and Tom proteins (By similarity).</text>
</comment>
<comment type="PTM">
    <text evidence="3">Phosphorylated. Phosphorylation by kinase PKC or casein kinase CK2 results in enhanced redox activity that stimulates binding of the FOS/JUN AP-1 complex to its cognate binding site. AP-endodeoxyribonuclease activity is not affected by CK2-mediated phosphorylation. Phosphorylation of Thr-232 by CDK5 in response to MPP(+)/MPTP (1-methyl-4-phenylpyridinium) reduces AP-endodeoxyribonuclease activity resulting in accumulation of DNA damage and contributing to neuronal death (By similarity).</text>
</comment>
<comment type="PTM">
    <text evidence="3">Acetylated on Lys-6. Acetylation is increased by the transcriptional coactivator EP300 acetyltransferase, genotoxic agents like H(2)O(2) and methyl methanesulfonate (MMS). Acetylation increases its binding affinity to the negative calcium response element (nCaRE) DNA promoter. The acetylated form induces a stronger binding of YBX1 to the Y-box sequence in the MDR1 promoter than the unacetylated form. Deacetylated on lysines. Lys-6 is deacetylated by SIRT1 (By similarity).</text>
</comment>
<comment type="PTM">
    <text evidence="3">Cleaved at Lys-30 by granzyme A to create the mitochondrial form; leading in reduction of binding to DNA, AP endodeoxyribonuclease activity, redox activation of transcription factors and to enhanced cell death. Cleaved by granzyme K; leading to intracellular ROS accumulation and enhanced cell death after oxidative stress (By similarity).</text>
</comment>
<comment type="PTM">
    <text evidence="3">Cys-64 and Cys-92 are nitrosylated in response to nitric oxide (NO) and lead to the exposure of the nuclear export signal (NES).</text>
</comment>
<comment type="PTM">
    <text evidence="3">Ubiquitinated by MDM2; leading to translocation to the cytoplasm and proteasomal degradation.</text>
</comment>
<comment type="miscellaneous">
    <text evidence="2">The specific activity of the cleaved mitochondrial endodeoxyribonuclease appears to be about 3-fold higher than of the full-length form. Extract of mitochondria, but not of nuclei or cytosol, cleaves recombinant APEX1 to generate a mitochondrial APEX1-sized product (By similarity).</text>
</comment>
<comment type="similarity">
    <text evidence="9">Belongs to the DNA repair enzymes AP/ExoA family.</text>
</comment>
<proteinExistence type="evidence at protein level"/>
<protein>
    <recommendedName>
        <fullName>DNA repair nuclease/redox regulator APEX1</fullName>
        <ecNumber evidence="3">3.1.11.2</ecNumber>
        <ecNumber evidence="3">3.1.21.-</ecNumber>
    </recommendedName>
    <alternativeName>
        <fullName>APEX nuclease</fullName>
        <shortName>APEN</shortName>
    </alternativeName>
    <alternativeName>
        <fullName>Apurinic-apyrimidinic endonuclease 1</fullName>
        <shortName>AP endonuclease 1</shortName>
    </alternativeName>
    <alternativeName>
        <fullName>Redox factor-1</fullName>
        <shortName>REF-1</shortName>
    </alternativeName>
    <component>
        <recommendedName>
            <fullName>DNA repair nuclease/redox regulator APEX1, mitochondrial</fullName>
        </recommendedName>
    </component>
</protein>
<reference key="1">
    <citation type="journal article" date="1994" name="Nucleic Acids Res.">
        <title>Cloning of the multifunctional rat apurinic/apyrimidinic endonuclease (rAPEN)/redox factor from an immature T cell line.</title>
        <authorList>
            <person name="Wilson T.M."/>
            <person name="Carney J.P."/>
            <person name="Kelley M.R."/>
        </authorList>
    </citation>
    <scope>NUCLEOTIDE SEQUENCE [MRNA]</scope>
    <source>
        <strain>Sprague-Dawley</strain>
        <tissue>Testis</tissue>
    </source>
</reference>
<reference key="2">
    <citation type="journal article" date="1999" name="Acta Med. Okayama">
        <title>Genomic structure of the rat major AP endonuclease gene (Apex) with an adjacent putative O-sialoglycoprotease gene (Prsmg1/Gcpl1) and a processed Apex pseudogene (Apexp1).</title>
        <authorList>
            <person name="Yao M."/>
            <person name="Akiyama K."/>
            <person name="Tan Y."/>
            <person name="Sarker A.H."/>
            <person name="Ikeda S."/>
            <person name="Alam S.S."/>
            <person name="Tsutsui K."/>
            <person name="Yoshida M.C."/>
            <person name="Seki S."/>
        </authorList>
    </citation>
    <scope>NUCLEOTIDE SEQUENCE [GENOMIC DNA]</scope>
</reference>
<reference key="3">
    <citation type="submission" date="1994-12" db="EMBL/GenBank/DDBJ databases">
        <title>cDNA and deduced amino acid sequence of rat APEX nuclease.</title>
        <authorList>
            <person name="Tan Y."/>
            <person name="Akiyama K."/>
            <person name="Seki S."/>
            <person name="Tabayashi T."/>
            <person name="Taniyama M."/>
        </authorList>
    </citation>
    <scope>NUCLEOTIDE SEQUENCE [MRNA]</scope>
    <source>
        <strain>Sprague-Dawley</strain>
        <tissue>Brain</tissue>
    </source>
</reference>
<reference key="4">
    <citation type="submission" date="2000-09" db="EMBL/GenBank/DDBJ databases">
        <title>Cloning of APEX cDNA gene from PC12 cell line.</title>
        <authorList>
            <person name="Xie Z.H."/>
            <person name="Liu C.Z."/>
            <person name="Wang A.M."/>
            <person name="Ma C."/>
        </authorList>
    </citation>
    <scope>NUCLEOTIDE SEQUENCE [MRNA]</scope>
    <source>
        <tissue>Pheochromocytoma</tissue>
    </source>
</reference>
<reference key="5">
    <citation type="journal article" date="2004" name="Genome Res.">
        <title>The status, quality, and expansion of the NIH full-length cDNA project: the Mammalian Gene Collection (MGC).</title>
        <authorList>
            <consortium name="The MGC Project Team"/>
        </authorList>
    </citation>
    <scope>NUCLEOTIDE SEQUENCE [LARGE SCALE MRNA]</scope>
    <source>
        <tissue>Kidney</tissue>
    </source>
</reference>
<reference key="6">
    <citation type="journal article" date="2001" name="Mutat. Res.">
        <title>Mitochondrial localization of APE/Ref-1 in thyroid cells.</title>
        <authorList>
            <person name="Tell G."/>
            <person name="Crivellato E."/>
            <person name="Pines A."/>
            <person name="Paron I."/>
            <person name="Pucillo C."/>
            <person name="Manzini G."/>
            <person name="Bandiera A."/>
            <person name="Kelley M.R."/>
            <person name="Di Loreto C."/>
            <person name="Damante G."/>
        </authorList>
    </citation>
    <scope>SUBCELLULAR LOCATION</scope>
</reference>
<reference key="7">
    <citation type="journal article" date="2009" name="Nucleic Acids Res.">
        <title>Identification of apurinic/apyrimidinic endonuclease 1 (APE1) as the endoribonuclease that cleaves c-myc mRNA.</title>
        <authorList>
            <person name="Barnes T."/>
            <person name="Kim W.C."/>
            <person name="Mantha A.K."/>
            <person name="Kim S.E."/>
            <person name="Izumi T."/>
            <person name="Mitra S."/>
            <person name="Lee C.H."/>
        </authorList>
    </citation>
    <scope>FUNCTION</scope>
    <scope>IDENTIFICATION BY MASS SPECTROMETRY</scope>
</reference>
<reference key="8">
    <citation type="journal article" date="2012" name="Nat. Commun.">
        <title>Quantitative maps of protein phosphorylation sites across 14 different rat organs and tissues.</title>
        <authorList>
            <person name="Lundby A."/>
            <person name="Secher A."/>
            <person name="Lage K."/>
            <person name="Nordsborg N.B."/>
            <person name="Dmytriyev A."/>
            <person name="Lundby C."/>
            <person name="Olsen J.V."/>
        </authorList>
    </citation>
    <scope>PHOSPHORYLATION [LARGE SCALE ANALYSIS] AT SER-18</scope>
    <scope>IDENTIFICATION BY MASS SPECTROMETRY [LARGE SCALE ANALYSIS]</scope>
</reference>
<sequence>MPKRGKRAAAEDGEEPKSEPETKKSKGAAKKTEKEAAGEGPVLYEDPPDQKTSASGKSATLKICSWNVDGLRAWIKKKGLDWVKEEAPDILCLQETKCSENKLPAELQELPGLTHQYWSAPSDKEGYSGVGLLSRQCPLKVSYGIGEEEHDQEGRVIVAEFESFILVTAYVPNAGRGLVRLEYRQRWDEAFRKFLKDLASRKPLVLCGDLNVAHEEIDLRNPKGNKKNAGFTPQERQGFGEMLQAVPLADSFRHLYPNTAYAYTFWTYMMNARSKNVGWRLDYFLLSHSLLPALCDSKIRSKALGSDHCPITLYLAL</sequence>
<keyword id="KW-0007">Acetylation</keyword>
<keyword id="KW-0010">Activator</keyword>
<keyword id="KW-0165">Cleavage on pair of basic residues</keyword>
<keyword id="KW-0963">Cytoplasm</keyword>
<keyword id="KW-1015">Disulfide bond</keyword>
<keyword id="KW-0227">DNA damage</keyword>
<keyword id="KW-0233">DNA recombination</keyword>
<keyword id="KW-0234">DNA repair</keyword>
<keyword id="KW-0238">DNA-binding</keyword>
<keyword id="KW-0255">Endonuclease</keyword>
<keyword id="KW-0256">Endoplasmic reticulum</keyword>
<keyword id="KW-0269">Exonuclease</keyword>
<keyword id="KW-0378">Hydrolase</keyword>
<keyword id="KW-0460">Magnesium</keyword>
<keyword id="KW-0479">Metal-binding</keyword>
<keyword id="KW-0496">Mitochondrion</keyword>
<keyword id="KW-0540">Nuclease</keyword>
<keyword id="KW-0539">Nucleus</keyword>
<keyword id="KW-0597">Phosphoprotein</keyword>
<keyword id="KW-1185">Reference proteome</keyword>
<keyword id="KW-0678">Repressor</keyword>
<keyword id="KW-0694">RNA-binding</keyword>
<keyword id="KW-0702">S-nitrosylation</keyword>
<keyword id="KW-0804">Transcription</keyword>
<keyword id="KW-0805">Transcription regulation</keyword>
<keyword id="KW-0832">Ubl conjugation</keyword>
<organism>
    <name type="scientific">Rattus norvegicus</name>
    <name type="common">Rat</name>
    <dbReference type="NCBI Taxonomy" id="10116"/>
    <lineage>
        <taxon>Eukaryota</taxon>
        <taxon>Metazoa</taxon>
        <taxon>Chordata</taxon>
        <taxon>Craniata</taxon>
        <taxon>Vertebrata</taxon>
        <taxon>Euteleostomi</taxon>
        <taxon>Mammalia</taxon>
        <taxon>Eutheria</taxon>
        <taxon>Euarchontoglires</taxon>
        <taxon>Glires</taxon>
        <taxon>Rodentia</taxon>
        <taxon>Myomorpha</taxon>
        <taxon>Muroidea</taxon>
        <taxon>Muridae</taxon>
        <taxon>Murinae</taxon>
        <taxon>Rattus</taxon>
    </lineage>
</organism>
<evidence type="ECO:0000250" key="1"/>
<evidence type="ECO:0000250" key="2">
    <source>
        <dbReference type="UniProtKB" id="P23196"/>
    </source>
</evidence>
<evidence type="ECO:0000250" key="3">
    <source>
        <dbReference type="UniProtKB" id="P27695"/>
    </source>
</evidence>
<evidence type="ECO:0000250" key="4">
    <source>
        <dbReference type="UniProtKB" id="P28352"/>
    </source>
</evidence>
<evidence type="ECO:0000255" key="5">
    <source>
        <dbReference type="PROSITE-ProRule" id="PRU00764"/>
    </source>
</evidence>
<evidence type="ECO:0000256" key="6">
    <source>
        <dbReference type="SAM" id="MobiDB-lite"/>
    </source>
</evidence>
<evidence type="ECO:0000269" key="7">
    <source>
    </source>
</evidence>
<evidence type="ECO:0000269" key="8">
    <source>
    </source>
</evidence>
<evidence type="ECO:0000305" key="9"/>
<evidence type="ECO:0007744" key="10">
    <source>
    </source>
</evidence>
<accession>P43138</accession>
<accession>Q548N9</accession>
<dbReference type="EC" id="3.1.11.2" evidence="3"/>
<dbReference type="EC" id="3.1.21.-" evidence="3"/>
<dbReference type="EMBL" id="L27076">
    <property type="protein sequence ID" value="AAA21019.1"/>
    <property type="molecule type" value="mRNA"/>
</dbReference>
<dbReference type="EMBL" id="AB023065">
    <property type="protein sequence ID" value="BAA82124.1"/>
    <property type="molecule type" value="Genomic_DNA"/>
</dbReference>
<dbReference type="EMBL" id="D44495">
    <property type="protein sequence ID" value="BAA07938.1"/>
    <property type="molecule type" value="mRNA"/>
</dbReference>
<dbReference type="EMBL" id="AF309114">
    <property type="protein sequence ID" value="AAG40859.1"/>
    <property type="molecule type" value="mRNA"/>
</dbReference>
<dbReference type="EMBL" id="BC078816">
    <property type="protein sequence ID" value="AAH78816.1"/>
    <property type="molecule type" value="mRNA"/>
</dbReference>
<dbReference type="PIR" id="S42397">
    <property type="entry name" value="S42397"/>
</dbReference>
<dbReference type="RefSeq" id="NP_077062.1">
    <property type="nucleotide sequence ID" value="NM_024148.1"/>
</dbReference>
<dbReference type="RefSeq" id="XP_006251975.1">
    <property type="nucleotide sequence ID" value="XM_006251913.3"/>
</dbReference>
<dbReference type="RefSeq" id="XP_063130746.1">
    <property type="nucleotide sequence ID" value="XM_063274676.1"/>
</dbReference>
<dbReference type="SMR" id="P43138"/>
<dbReference type="FunCoup" id="P43138">
    <property type="interactions" value="2359"/>
</dbReference>
<dbReference type="STRING" id="10116.ENSRNOP00000068673"/>
<dbReference type="MoonProt" id="P43138"/>
<dbReference type="iPTMnet" id="P43138"/>
<dbReference type="PhosphoSitePlus" id="P43138"/>
<dbReference type="jPOST" id="P43138"/>
<dbReference type="PaxDb" id="10116-ENSRNOP00000013176"/>
<dbReference type="GeneID" id="79116"/>
<dbReference type="KEGG" id="rno:79116"/>
<dbReference type="UCSC" id="RGD:2126">
    <property type="organism name" value="rat"/>
</dbReference>
<dbReference type="AGR" id="RGD:2126"/>
<dbReference type="CTD" id="328"/>
<dbReference type="RGD" id="2126">
    <property type="gene designation" value="Apex1"/>
</dbReference>
<dbReference type="VEuPathDB" id="HostDB:ENSRNOG00000009663"/>
<dbReference type="eggNOG" id="KOG1294">
    <property type="taxonomic scope" value="Eukaryota"/>
</dbReference>
<dbReference type="HOGENOM" id="CLU_027539_1_3_1"/>
<dbReference type="InParanoid" id="P43138"/>
<dbReference type="OrthoDB" id="498125at2759"/>
<dbReference type="PhylomeDB" id="P43138"/>
<dbReference type="TreeFam" id="TF315048"/>
<dbReference type="Reactome" id="R-RNO-110357">
    <property type="pathway name" value="Displacement of DNA glycosylase by APEX1"/>
</dbReference>
<dbReference type="Reactome" id="R-RNO-110362">
    <property type="pathway name" value="POLB-Dependent Long Patch Base Excision Repair"/>
</dbReference>
<dbReference type="Reactome" id="R-RNO-110373">
    <property type="pathway name" value="Resolution of AP sites via the multiple-nucleotide patch replacement pathway"/>
</dbReference>
<dbReference type="Reactome" id="R-RNO-5651801">
    <property type="pathway name" value="PCNA-Dependent Long Patch Base Excision Repair"/>
</dbReference>
<dbReference type="Reactome" id="R-RNO-73930">
    <property type="pathway name" value="Abasic sugar-phosphate removal via the single-nucleotide replacement pathway"/>
</dbReference>
<dbReference type="Reactome" id="R-RNO-73933">
    <property type="pathway name" value="Resolution of Abasic Sites (AP sites)"/>
</dbReference>
<dbReference type="PRO" id="PR:P43138"/>
<dbReference type="Proteomes" id="UP000002494">
    <property type="component" value="Chromosome 15"/>
</dbReference>
<dbReference type="Bgee" id="ENSRNOG00000009663">
    <property type="expression patterns" value="Expressed in ovary and 20 other cell types or tissues"/>
</dbReference>
<dbReference type="GO" id="GO:0005737">
    <property type="term" value="C:cytoplasm"/>
    <property type="evidence" value="ECO:0000266"/>
    <property type="project" value="RGD"/>
</dbReference>
<dbReference type="GO" id="GO:0005783">
    <property type="term" value="C:endoplasmic reticulum"/>
    <property type="evidence" value="ECO:0007669"/>
    <property type="project" value="UniProtKB-SubCell"/>
</dbReference>
<dbReference type="GO" id="GO:0005739">
    <property type="term" value="C:mitochondrion"/>
    <property type="evidence" value="ECO:0000266"/>
    <property type="project" value="RGD"/>
</dbReference>
<dbReference type="GO" id="GO:0016607">
    <property type="term" value="C:nuclear speck"/>
    <property type="evidence" value="ECO:0000250"/>
    <property type="project" value="UniProtKB"/>
</dbReference>
<dbReference type="GO" id="GO:0005730">
    <property type="term" value="C:nucleolus"/>
    <property type="evidence" value="ECO:0000250"/>
    <property type="project" value="UniProtKB"/>
</dbReference>
<dbReference type="GO" id="GO:0005634">
    <property type="term" value="C:nucleus"/>
    <property type="evidence" value="ECO:0000250"/>
    <property type="project" value="UniProtKB"/>
</dbReference>
<dbReference type="GO" id="GO:0048471">
    <property type="term" value="C:perinuclear region of cytoplasm"/>
    <property type="evidence" value="ECO:0000250"/>
    <property type="project" value="UniProtKB"/>
</dbReference>
<dbReference type="GO" id="GO:0005667">
    <property type="term" value="C:transcription regulator complex"/>
    <property type="evidence" value="ECO:0000314"/>
    <property type="project" value="RGD"/>
</dbReference>
<dbReference type="GO" id="GO:0008408">
    <property type="term" value="F:3'-5' exonuclease activity"/>
    <property type="evidence" value="ECO:0000250"/>
    <property type="project" value="UniProtKB"/>
</dbReference>
<dbReference type="GO" id="GO:0008296">
    <property type="term" value="F:3'-5'-DNA exonuclease activity"/>
    <property type="evidence" value="ECO:0000266"/>
    <property type="project" value="RGD"/>
</dbReference>
<dbReference type="GO" id="GO:0031490">
    <property type="term" value="F:chromatin DNA binding"/>
    <property type="evidence" value="ECO:0000250"/>
    <property type="project" value="UniProtKB"/>
</dbReference>
<dbReference type="GO" id="GO:0052720">
    <property type="term" value="F:class II DNA-(apurinic or apyrimidinic site) endonuclease activity"/>
    <property type="evidence" value="ECO:0000250"/>
    <property type="project" value="UniProtKB"/>
</dbReference>
<dbReference type="GO" id="GO:0003684">
    <property type="term" value="F:damaged DNA binding"/>
    <property type="evidence" value="ECO:0000250"/>
    <property type="project" value="UniProtKB"/>
</dbReference>
<dbReference type="GO" id="GO:0003677">
    <property type="term" value="F:DNA binding"/>
    <property type="evidence" value="ECO:0000250"/>
    <property type="project" value="UniProtKB"/>
</dbReference>
<dbReference type="GO" id="GO:0140431">
    <property type="term" value="F:DNA-(abasic site) binding"/>
    <property type="evidence" value="ECO:0000250"/>
    <property type="project" value="UniProtKB"/>
</dbReference>
<dbReference type="GO" id="GO:0003906">
    <property type="term" value="F:DNA-(apurinic or apyrimidinic site) endonuclease activity"/>
    <property type="evidence" value="ECO:0000250"/>
    <property type="project" value="UniProtKB"/>
</dbReference>
<dbReference type="GO" id="GO:0008311">
    <property type="term" value="F:double-stranded DNA 3'-5' DNA exonuclease activity"/>
    <property type="evidence" value="ECO:0000318"/>
    <property type="project" value="GO_Central"/>
</dbReference>
<dbReference type="GO" id="GO:0008309">
    <property type="term" value="F:double-stranded DNA exodeoxyribonuclease activity"/>
    <property type="evidence" value="ECO:0000266"/>
    <property type="project" value="RGD"/>
</dbReference>
<dbReference type="GO" id="GO:0003691">
    <property type="term" value="F:double-stranded telomeric DNA binding"/>
    <property type="evidence" value="ECO:0000266"/>
    <property type="project" value="RGD"/>
</dbReference>
<dbReference type="GO" id="GO:0004519">
    <property type="term" value="F:endonuclease activity"/>
    <property type="evidence" value="ECO:0000266"/>
    <property type="project" value="RGD"/>
</dbReference>
<dbReference type="GO" id="GO:0046872">
    <property type="term" value="F:metal ion binding"/>
    <property type="evidence" value="ECO:0000250"/>
    <property type="project" value="UniProtKB"/>
</dbReference>
<dbReference type="GO" id="GO:0051059">
    <property type="term" value="F:NF-kappaB binding"/>
    <property type="evidence" value="ECO:0000314"/>
    <property type="project" value="RGD"/>
</dbReference>
<dbReference type="GO" id="GO:0016491">
    <property type="term" value="F:oxidoreductase activity"/>
    <property type="evidence" value="ECO:0000250"/>
    <property type="project" value="UniProtKB"/>
</dbReference>
<dbReference type="GO" id="GO:0090580">
    <property type="term" value="F:phosphodiesterase activity, acting on 3'-phosphoglycolate-terminated DNA strands"/>
    <property type="evidence" value="ECO:0000266"/>
    <property type="project" value="RGD"/>
</dbReference>
<dbReference type="GO" id="GO:0008081">
    <property type="term" value="F:phosphoric diester hydrolase activity"/>
    <property type="evidence" value="ECO:0000266"/>
    <property type="project" value="RGD"/>
</dbReference>
<dbReference type="GO" id="GO:0044877">
    <property type="term" value="F:protein-containing complex binding"/>
    <property type="evidence" value="ECO:0000353"/>
    <property type="project" value="RGD"/>
</dbReference>
<dbReference type="GO" id="GO:0003723">
    <property type="term" value="F:RNA binding"/>
    <property type="evidence" value="ECO:0007669"/>
    <property type="project" value="UniProtKB-KW"/>
</dbReference>
<dbReference type="GO" id="GO:0004521">
    <property type="term" value="F:RNA endonuclease activity"/>
    <property type="evidence" value="ECO:0000314"/>
    <property type="project" value="RGD"/>
</dbReference>
<dbReference type="GO" id="GO:0016890">
    <property type="term" value="F:site-specific endodeoxyribonuclease activity, specific for altered base"/>
    <property type="evidence" value="ECO:0000250"/>
    <property type="project" value="UniProtKB"/>
</dbReference>
<dbReference type="GO" id="GO:0003713">
    <property type="term" value="F:transcription coactivator activity"/>
    <property type="evidence" value="ECO:0000250"/>
    <property type="project" value="UniProtKB"/>
</dbReference>
<dbReference type="GO" id="GO:0006284">
    <property type="term" value="P:base-excision repair"/>
    <property type="evidence" value="ECO:0000266"/>
    <property type="project" value="RGD"/>
</dbReference>
<dbReference type="GO" id="GO:0045454">
    <property type="term" value="P:cell redox homeostasis"/>
    <property type="evidence" value="ECO:0000266"/>
    <property type="project" value="RGD"/>
</dbReference>
<dbReference type="GO" id="GO:0071320">
    <property type="term" value="P:cellular response to cAMP"/>
    <property type="evidence" value="ECO:0000270"/>
    <property type="project" value="RGD"/>
</dbReference>
<dbReference type="GO" id="GO:0070301">
    <property type="term" value="P:cellular response to hydrogen peroxide"/>
    <property type="evidence" value="ECO:0000314"/>
    <property type="project" value="RGD"/>
</dbReference>
<dbReference type="GO" id="GO:1904401">
    <property type="term" value="P:cellular response to Thyroid stimulating hormone"/>
    <property type="evidence" value="ECO:0000270"/>
    <property type="project" value="RGD"/>
</dbReference>
<dbReference type="GO" id="GO:0006308">
    <property type="term" value="P:DNA catabolic process"/>
    <property type="evidence" value="ECO:0000266"/>
    <property type="project" value="RGD"/>
</dbReference>
<dbReference type="GO" id="GO:0006310">
    <property type="term" value="P:DNA recombination"/>
    <property type="evidence" value="ECO:0007669"/>
    <property type="project" value="UniProtKB-KW"/>
</dbReference>
<dbReference type="GO" id="GO:0006281">
    <property type="term" value="P:DNA repair"/>
    <property type="evidence" value="ECO:0000250"/>
    <property type="project" value="UniProtKB"/>
</dbReference>
<dbReference type="GO" id="GO:0014912">
    <property type="term" value="P:negative regulation of smooth muscle cell migration"/>
    <property type="evidence" value="ECO:0000315"/>
    <property type="project" value="RGD"/>
</dbReference>
<dbReference type="GO" id="GO:1900087">
    <property type="term" value="P:positive regulation of G1/S transition of mitotic cell cycle"/>
    <property type="evidence" value="ECO:0000315"/>
    <property type="project" value="RGD"/>
</dbReference>
<dbReference type="GO" id="GO:0044029">
    <property type="term" value="P:positive regulation of gene expression via chromosomal CpG island demethylation"/>
    <property type="evidence" value="ECO:0000250"/>
    <property type="project" value="UniProtKB"/>
</dbReference>
<dbReference type="GO" id="GO:0045944">
    <property type="term" value="P:positive regulation of transcription by RNA polymerase II"/>
    <property type="evidence" value="ECO:0000266"/>
    <property type="project" value="RGD"/>
</dbReference>
<dbReference type="GO" id="GO:0042981">
    <property type="term" value="P:regulation of apoptotic process"/>
    <property type="evidence" value="ECO:0000250"/>
    <property type="project" value="UniProtKB"/>
</dbReference>
<dbReference type="GO" id="GO:0043488">
    <property type="term" value="P:regulation of mRNA stability"/>
    <property type="evidence" value="ECO:0000250"/>
    <property type="project" value="UniProtKB"/>
</dbReference>
<dbReference type="GO" id="GO:0009410">
    <property type="term" value="P:response to xenobiotic stimulus"/>
    <property type="evidence" value="ECO:0000270"/>
    <property type="project" value="RGD"/>
</dbReference>
<dbReference type="GO" id="GO:0000723">
    <property type="term" value="P:telomere maintenance"/>
    <property type="evidence" value="ECO:0000266"/>
    <property type="project" value="RGD"/>
</dbReference>
<dbReference type="GO" id="GO:0097698">
    <property type="term" value="P:telomere maintenance via base-excision repair"/>
    <property type="evidence" value="ECO:0000266"/>
    <property type="project" value="RGD"/>
</dbReference>
<dbReference type="CDD" id="cd09087">
    <property type="entry name" value="Ape1-like_AP-endo"/>
    <property type="match status" value="1"/>
</dbReference>
<dbReference type="FunFam" id="3.60.10.10:FF:000009">
    <property type="entry name" value="DNA-(apurinic or apyrimidinic site) lyase"/>
    <property type="match status" value="1"/>
</dbReference>
<dbReference type="Gene3D" id="3.60.10.10">
    <property type="entry name" value="Endonuclease/exonuclease/phosphatase"/>
    <property type="match status" value="1"/>
</dbReference>
<dbReference type="InterPro" id="IPR004808">
    <property type="entry name" value="AP_endonuc_1"/>
</dbReference>
<dbReference type="InterPro" id="IPR020847">
    <property type="entry name" value="AP_endonuclease_F1_BS"/>
</dbReference>
<dbReference type="InterPro" id="IPR020848">
    <property type="entry name" value="AP_endonuclease_F1_CS"/>
</dbReference>
<dbReference type="InterPro" id="IPR036691">
    <property type="entry name" value="Endo/exonu/phosph_ase_sf"/>
</dbReference>
<dbReference type="InterPro" id="IPR005135">
    <property type="entry name" value="Endo/exonuclease/phosphatase"/>
</dbReference>
<dbReference type="NCBIfam" id="TIGR00195">
    <property type="entry name" value="exoDNase_III"/>
    <property type="match status" value="1"/>
</dbReference>
<dbReference type="NCBIfam" id="TIGR00633">
    <property type="entry name" value="xth"/>
    <property type="match status" value="1"/>
</dbReference>
<dbReference type="PANTHER" id="PTHR22748">
    <property type="entry name" value="AP ENDONUCLEASE"/>
    <property type="match status" value="1"/>
</dbReference>
<dbReference type="PANTHER" id="PTHR22748:SF6">
    <property type="entry name" value="DNA-(APURINIC OR APYRIMIDINIC SITE) ENDONUCLEASE"/>
    <property type="match status" value="1"/>
</dbReference>
<dbReference type="Pfam" id="PF03372">
    <property type="entry name" value="Exo_endo_phos"/>
    <property type="match status" value="1"/>
</dbReference>
<dbReference type="SUPFAM" id="SSF56219">
    <property type="entry name" value="DNase I-like"/>
    <property type="match status" value="1"/>
</dbReference>
<dbReference type="PROSITE" id="PS00726">
    <property type="entry name" value="AP_NUCLEASE_F1_1"/>
    <property type="match status" value="1"/>
</dbReference>
<dbReference type="PROSITE" id="PS00727">
    <property type="entry name" value="AP_NUCLEASE_F1_2"/>
    <property type="match status" value="1"/>
</dbReference>
<dbReference type="PROSITE" id="PS00728">
    <property type="entry name" value="AP_NUCLEASE_F1_3"/>
    <property type="match status" value="1"/>
</dbReference>
<dbReference type="PROSITE" id="PS51435">
    <property type="entry name" value="AP_NUCLEASE_F1_4"/>
    <property type="match status" value="1"/>
</dbReference>
<name>APEX1_RAT</name>